<reference key="1">
    <citation type="journal article" date="1998" name="Mol. Gen. Genet.">
        <title>Characterization of ptxS, a Pseudomonas aeruginosa gene which interferes with the effect of the exotoxin A positive regulatory gene, ptxR.</title>
        <authorList>
            <person name="Colmer J.A."/>
            <person name="Hamood A.N."/>
        </authorList>
    </citation>
    <scope>NUCLEOTIDE SEQUENCE [GENOMIC DNA]</scope>
    <scope>FUNCTION</scope>
    <scope>DISRUPTION PHENOTYPE</scope>
    <source>
        <strain>ATCC 15692 / DSM 22644 / CIP 104116 / JCM 14847 / LMG 12228 / 1C / PRS 101 / PAO1</strain>
        <strain>PA103</strain>
    </source>
</reference>
<reference key="2">
    <citation type="journal article" date="2000" name="Nature">
        <title>Complete genome sequence of Pseudomonas aeruginosa PAO1, an opportunistic pathogen.</title>
        <authorList>
            <person name="Stover C.K."/>
            <person name="Pham X.-Q.T."/>
            <person name="Erwin A.L."/>
            <person name="Mizoguchi S.D."/>
            <person name="Warrener P."/>
            <person name="Hickey M.J."/>
            <person name="Brinkman F.S.L."/>
            <person name="Hufnagle W.O."/>
            <person name="Kowalik D.J."/>
            <person name="Lagrou M."/>
            <person name="Garber R.L."/>
            <person name="Goltry L."/>
            <person name="Tolentino E."/>
            <person name="Westbrock-Wadman S."/>
            <person name="Yuan Y."/>
            <person name="Brody L.L."/>
            <person name="Coulter S.N."/>
            <person name="Folger K.R."/>
            <person name="Kas A."/>
            <person name="Larbig K."/>
            <person name="Lim R.M."/>
            <person name="Smith K.A."/>
            <person name="Spencer D.H."/>
            <person name="Wong G.K.-S."/>
            <person name="Wu Z."/>
            <person name="Paulsen I.T."/>
            <person name="Reizer J."/>
            <person name="Saier M.H. Jr."/>
            <person name="Hancock R.E.W."/>
            <person name="Lory S."/>
            <person name="Olson M.V."/>
        </authorList>
    </citation>
    <scope>NUCLEOTIDE SEQUENCE [LARGE SCALE GENOMIC DNA]</scope>
    <source>
        <strain>ATCC 15692 / DSM 22644 / CIP 104116 / JCM 14847 / LMG 12228 / 1C / PRS 101 / PAO1</strain>
    </source>
</reference>
<reference key="3">
    <citation type="journal article" date="1999" name="J. Bacteriol.">
        <title>The Pseudomonas aeruginosa exotoxin A regulatory gene, ptxS: evidence for negative autoregulation.</title>
        <authorList>
            <person name="Swanson B.L."/>
            <person name="Colmer J.A."/>
            <person name="Hamood A.N."/>
        </authorList>
    </citation>
    <scope>FUNCTION</scope>
    <scope>TRANSCRIPTIONAL REGULATION</scope>
    <source>
        <strain>ATCC 15692 / DSM 22644 / CIP 104116 / JCM 14847 / LMG 12228 / 1C / PRS 101 / PAO1</strain>
    </source>
</reference>
<reference key="4">
    <citation type="journal article" date="2000" name="J. Bacteriol.">
        <title>Autoregulation of the Pseudomonas aeruginosa protein PtxS occurs through a specific operator site within the ptxS upstream region.</title>
        <authorList>
            <person name="Swanson B.L."/>
            <person name="Hamood A.N."/>
        </authorList>
    </citation>
    <scope>FUNCTION</scope>
    <scope>TRANSCRIPTIONAL REGULATION</scope>
    <source>
        <strain>ATCC 15692 / DSM 22644 / CIP 104116 / JCM 14847 / LMG 12228 / 1C / PRS 101 / PAO1</strain>
    </source>
</reference>
<reference key="5">
    <citation type="journal article" date="2000" name="Mol. Microbiol.">
        <title>Characterization of the 2-ketogluconate utilization operon in Pseudomonas aeruginosa PAO1.</title>
        <authorList>
            <person name="Swanson B.L."/>
            <person name="Hager P."/>
            <person name="Phibbs P. Jr."/>
            <person name="Ochsner U."/>
            <person name="Vasil M.L."/>
            <person name="Hamood A.N."/>
        </authorList>
    </citation>
    <scope>FUNCTION</scope>
    <scope>ACTIVITY REGULATION</scope>
    <source>
        <strain>ATCC 15692 / DSM 22644 / CIP 104116 / JCM 14847 / LMG 12228 / 1C / PRS 101 / PAO1</strain>
    </source>
</reference>
<reference key="6">
    <citation type="journal article" date="2004" name="Microbiology">
        <title>The Pseudomonas aeruginosa global regulator MvaT specifically binds to the ptxS upstream region and enhances ptxS expression.</title>
        <authorList>
            <person name="Westfall L.W."/>
            <person name="Luna A.M."/>
            <person name="Francisco M.S."/>
            <person name="Diggle S.P."/>
            <person name="Worrall K.E."/>
            <person name="Williams P."/>
            <person name="Camara M."/>
            <person name="Hamood A.N."/>
        </authorList>
    </citation>
    <scope>TRANSCRIPTIONAL REGULATION</scope>
    <source>
        <strain>ATCC 15692 / DSM 22644 / CIP 104116 / JCM 14847 / LMG 12228 / 1C / PRS 101 / PAO1</strain>
    </source>
</reference>
<reference key="7">
    <citation type="journal article" date="2012" name="PLoS ONE">
        <title>Genes for carbon metabolism and the ToxA virulence factor in Pseudomonas aeruginosa are regulated through molecular interactions of PtxR and PtxS.</title>
        <authorList>
            <person name="Daddaoua A."/>
            <person name="Fillet S."/>
            <person name="Fernandez M."/>
            <person name="Udaondo Z."/>
            <person name="Krell T."/>
            <person name="Ramos J.L."/>
        </authorList>
    </citation>
    <scope>FUNCTION</scope>
    <scope>ACTIVITY REGULATION</scope>
    <scope>INTERACTION WITH PTXR</scope>
    <scope>TRANSCRIPTIONAL REGULATION</scope>
    <source>
        <strain>ATCC 15692 / DSM 22644 / CIP 104116 / JCM 14847 / LMG 12228 / 1C / PRS 101 / PAO1</strain>
    </source>
</reference>
<reference key="8">
    <citation type="journal article" date="2013" name="Nucleic Acids Res.">
        <title>Transcriptional control by two interacting regulatory proteins: identification of the PtxS binding site at PtxR.</title>
        <authorList>
            <person name="Daddaoua A."/>
            <person name="Krell T."/>
            <person name="Ramos J.L."/>
        </authorList>
    </citation>
    <scope>FUNCTION</scope>
    <scope>ACTIVITY REGULATION</scope>
    <scope>INTERACTION WITH PTXR</scope>
</reference>
<organism>
    <name type="scientific">Pseudomonas aeruginosa (strain ATCC 15692 / DSM 22644 / CIP 104116 / JCM 14847 / LMG 12228 / 1C / PRS 101 / PAO1)</name>
    <dbReference type="NCBI Taxonomy" id="208964"/>
    <lineage>
        <taxon>Bacteria</taxon>
        <taxon>Pseudomonadati</taxon>
        <taxon>Pseudomonadota</taxon>
        <taxon>Gammaproteobacteria</taxon>
        <taxon>Pseudomonadales</taxon>
        <taxon>Pseudomonadaceae</taxon>
        <taxon>Pseudomonas</taxon>
    </lineage>
</organism>
<keyword id="KW-0238">DNA-binding</keyword>
<keyword id="KW-1185">Reference proteome</keyword>
<keyword id="KW-0678">Repressor</keyword>
<keyword id="KW-0804">Transcription</keyword>
<keyword id="KW-0805">Transcription regulation</keyword>
<name>PTXS_PSEAE</name>
<evidence type="ECO:0000255" key="1">
    <source>
        <dbReference type="PROSITE-ProRule" id="PRU00111"/>
    </source>
</evidence>
<evidence type="ECO:0000269" key="2">
    <source>
    </source>
</evidence>
<evidence type="ECO:0000269" key="3">
    <source>
    </source>
</evidence>
<evidence type="ECO:0000269" key="4">
    <source>
    </source>
</evidence>
<evidence type="ECO:0000269" key="5">
    <source>
    </source>
</evidence>
<evidence type="ECO:0000269" key="6">
    <source>
    </source>
</evidence>
<evidence type="ECO:0000269" key="7">
    <source>
    </source>
</evidence>
<evidence type="ECO:0000269" key="8">
    <source>
    </source>
</evidence>
<evidence type="ECO:0000303" key="9">
    <source>
    </source>
</evidence>
<evidence type="ECO:0000305" key="10"/>
<evidence type="ECO:0000312" key="11">
    <source>
        <dbReference type="EMBL" id="AAG05647.1"/>
    </source>
</evidence>
<proteinExistence type="evidence at protein level"/>
<sequence length="340" mass="37391">MNGSVLPSRGRVTINQVAEAAGVSKASVSRYIGGDRQLLADATARRIERAIDQLDYRPNQMARGLKRGRTRLIGMLVADILNPYSVAVMHGVETACREHGYSLVVCNTDRDDEQERHHLAALQSYNVEGLIVNTLGHHPGELRALHRELPMVLVDRQLAELDTDLVGLDNADAVEQALDHLQHRGFRDILLVTEPLDGTSSRIERVQAFNASIGRRPALKGQVLQTDDFFRDGLRAFLSASGPGPKALFTCNGVATLCATRQLRDLGCRLFDEVGLLALDELDWYPLVGSGITALAQPTDEIGRTAFERLLARLEGDREPARRVTFPAQLIVRGSTHPRG</sequence>
<accession>G3XD97</accession>
<protein>
    <recommendedName>
        <fullName evidence="10">HTH-type transcriptional regulator PtxS</fullName>
    </recommendedName>
</protein>
<gene>
    <name evidence="9" type="primary">ptxS</name>
    <name evidence="11" type="ordered locus">PA2259</name>
</gene>
<comment type="function">
    <text evidence="2 3 6 7">Negatively regulates glucose metabolism by binding directly to the promoter region of the kgu and gad operons (PubMed:22844393, PubMed:24019239). It also negatively regulates its own synthesis (PubMed:10438759, PubMed:10894751, PubMed:22844393).</text>
</comment>
<comment type="function">
    <text evidence="4 6 7 8">In addition, in pathogenic strains, PtxS modulates PtxR activity in response to 2-ketogluconate (PubMed:22844393, PubMed:24019239, PubMed:9645431). In the presence of PtxR, which also binds to the kgu and gad promoter regions, PtxS and PtxR form a tight complex, creating a DNA-loop that prevents RNA polymerase promoter access and expression of the glucose metabolism genes (PubMed:10931350, PubMed:22844393, PubMed:24019239). Binding of the 2-ketogluconate effector to PtxS causes PtxS/PtxR complex dissociation and leads to the dissolution of the repression DNA-loop, facilitating the entry of the RNA polymerase and enabling the transcription of the genes (PubMed:22844393, PubMed:24019239). Also plays an important role in the regulation of the expression of the virulence factor exotoxin A (toxA) (PubMed:22844393, PubMed:9645431). PtxS does not bind directly to the toxA promoter but negatively regulates the production of exotoxin A by binding to PtxR and interfering with its positive regulator activity (PubMed:22844393, PubMed:9645431). In the presence of 2-ketogluconate, PtxS is released and PtxR can recruit RNA polymerase (PubMed:22844393).</text>
</comment>
<comment type="activity regulation">
    <text evidence="4 6 7">2-ketogluconate acts as a molecular effector and causes dissociation of the PtxS/PtxR complex.</text>
</comment>
<comment type="subunit">
    <text evidence="6 7">Interacts with PtxR in the absence of 2-ketogluconate (PubMed:22844393, PubMed:24019239). Binding of the 2-ketogluconate effector to PtxS causes PtxS/PtxR complex dissociation (PubMed:22844393, PubMed:24019239).</text>
</comment>
<comment type="induction">
    <text evidence="2 3 5 6">Expression is enhanced by the global regulator MvaT, which binds to the ptxR-ptxS intergenic region (PubMed:15528665). Negatively autoregulates its own synthesis by binding to a specific operator site within the ptxS upstream region (PubMed:10438759, PubMed:10894751, PubMed:22844393).</text>
</comment>
<comment type="domain">
    <text evidence="10">Contains an N-terminal helix-turn-helix DNA-binding domain and a C-terminal domain that binds the effector.</text>
</comment>
<comment type="disruption phenotype">
    <text evidence="8">Mutant exhibits a twofold increase in exotoxin A production.</text>
</comment>
<feature type="chain" id="PRO_0000456054" description="HTH-type transcriptional regulator PtxS">
    <location>
        <begin position="1"/>
        <end position="340"/>
    </location>
</feature>
<feature type="domain" description="HTH lacI-type" evidence="1">
    <location>
        <begin position="12"/>
        <end position="67"/>
    </location>
</feature>
<feature type="DNA-binding region" description="H-T-H motif" evidence="1">
    <location>
        <begin position="14"/>
        <end position="33"/>
    </location>
</feature>
<dbReference type="EMBL" id="AE004091">
    <property type="protein sequence ID" value="AAG05647.1"/>
    <property type="molecule type" value="Genomic_DNA"/>
</dbReference>
<dbReference type="PIR" id="E83364">
    <property type="entry name" value="E83364"/>
</dbReference>
<dbReference type="RefSeq" id="NP_250949.1">
    <property type="nucleotide sequence ID" value="NC_002516.2"/>
</dbReference>
<dbReference type="RefSeq" id="WP_003113738.1">
    <property type="nucleotide sequence ID" value="NZ_QZGE01000014.1"/>
</dbReference>
<dbReference type="SMR" id="G3XD97"/>
<dbReference type="STRING" id="208964.PA2259"/>
<dbReference type="PaxDb" id="208964-PA2259"/>
<dbReference type="GeneID" id="877811"/>
<dbReference type="KEGG" id="pae:PA2259"/>
<dbReference type="PATRIC" id="fig|208964.12.peg.2361"/>
<dbReference type="PseudoCAP" id="PA2259"/>
<dbReference type="HOGENOM" id="CLU_037628_6_0_6"/>
<dbReference type="InParanoid" id="G3XD97"/>
<dbReference type="OrthoDB" id="5672046at2"/>
<dbReference type="PhylomeDB" id="G3XD97"/>
<dbReference type="Proteomes" id="UP000002438">
    <property type="component" value="Chromosome"/>
</dbReference>
<dbReference type="CollecTF" id="EXPREG_00000500"/>
<dbReference type="GO" id="GO:0032993">
    <property type="term" value="C:protein-DNA complex"/>
    <property type="evidence" value="ECO:0000315"/>
    <property type="project" value="CollecTF"/>
</dbReference>
<dbReference type="GO" id="GO:0003700">
    <property type="term" value="F:DNA-binding transcription factor activity"/>
    <property type="evidence" value="ECO:0000318"/>
    <property type="project" value="GO_Central"/>
</dbReference>
<dbReference type="GO" id="GO:0001217">
    <property type="term" value="F:DNA-binding transcription repressor activity"/>
    <property type="evidence" value="ECO:0000315"/>
    <property type="project" value="CollecTF"/>
</dbReference>
<dbReference type="GO" id="GO:0000976">
    <property type="term" value="F:transcription cis-regulatory region binding"/>
    <property type="evidence" value="ECO:0000315"/>
    <property type="project" value="CollecTF"/>
</dbReference>
<dbReference type="GO" id="GO:0045892">
    <property type="term" value="P:negative regulation of DNA-templated transcription"/>
    <property type="evidence" value="ECO:0000314"/>
    <property type="project" value="PseudoCAP"/>
</dbReference>
<dbReference type="GO" id="GO:0006355">
    <property type="term" value="P:regulation of DNA-templated transcription"/>
    <property type="evidence" value="ECO:0000318"/>
    <property type="project" value="GO_Central"/>
</dbReference>
<dbReference type="CDD" id="cd01392">
    <property type="entry name" value="HTH_LacI"/>
    <property type="match status" value="1"/>
</dbReference>
<dbReference type="CDD" id="cd06283">
    <property type="entry name" value="PBP1_RegR_EndR_KdgR-like"/>
    <property type="match status" value="1"/>
</dbReference>
<dbReference type="FunFam" id="3.40.50.2300:FF:000339">
    <property type="entry name" value="Transcriptional regulator PtxS"/>
    <property type="match status" value="1"/>
</dbReference>
<dbReference type="Gene3D" id="3.40.50.2300">
    <property type="match status" value="2"/>
</dbReference>
<dbReference type="Gene3D" id="1.10.260.40">
    <property type="entry name" value="lambda repressor-like DNA-binding domains"/>
    <property type="match status" value="1"/>
</dbReference>
<dbReference type="InterPro" id="IPR000843">
    <property type="entry name" value="HTH_LacI"/>
</dbReference>
<dbReference type="InterPro" id="IPR010982">
    <property type="entry name" value="Lambda_DNA-bd_dom_sf"/>
</dbReference>
<dbReference type="InterPro" id="IPR001761">
    <property type="entry name" value="Peripla_BP/Lac1_sug-bd_dom"/>
</dbReference>
<dbReference type="InterPro" id="IPR028082">
    <property type="entry name" value="Peripla_BP_I"/>
</dbReference>
<dbReference type="PANTHER" id="PTHR30146">
    <property type="entry name" value="LACI-RELATED TRANSCRIPTIONAL REPRESSOR"/>
    <property type="match status" value="1"/>
</dbReference>
<dbReference type="PANTHER" id="PTHR30146:SF145">
    <property type="entry name" value="RIBOSE OPERON REPRESSOR"/>
    <property type="match status" value="1"/>
</dbReference>
<dbReference type="Pfam" id="PF00356">
    <property type="entry name" value="LacI"/>
    <property type="match status" value="1"/>
</dbReference>
<dbReference type="Pfam" id="PF00532">
    <property type="entry name" value="Peripla_BP_1"/>
    <property type="match status" value="1"/>
</dbReference>
<dbReference type="SMART" id="SM00354">
    <property type="entry name" value="HTH_LACI"/>
    <property type="match status" value="1"/>
</dbReference>
<dbReference type="SUPFAM" id="SSF47413">
    <property type="entry name" value="lambda repressor-like DNA-binding domains"/>
    <property type="match status" value="1"/>
</dbReference>
<dbReference type="SUPFAM" id="SSF53822">
    <property type="entry name" value="Periplasmic binding protein-like I"/>
    <property type="match status" value="1"/>
</dbReference>
<dbReference type="PROSITE" id="PS50932">
    <property type="entry name" value="HTH_LACI_2"/>
    <property type="match status" value="1"/>
</dbReference>